<comment type="function">
    <text evidence="1">May be involved in the metabolism of insect hormones and in the breakdown of synthetic insecticides.</text>
</comment>
<comment type="cofactor">
    <cofactor evidence="1">
        <name>heme</name>
        <dbReference type="ChEBI" id="CHEBI:30413"/>
    </cofactor>
</comment>
<comment type="subcellular location">
    <subcellularLocation>
        <location evidence="2">Endoplasmic reticulum membrane</location>
        <topology evidence="2">Peripheral membrane protein</topology>
    </subcellularLocation>
    <subcellularLocation>
        <location evidence="2">Microsome membrane</location>
        <topology evidence="2">Peripheral membrane protein</topology>
    </subcellularLocation>
</comment>
<comment type="similarity">
    <text evidence="2">Belongs to the cytochrome P450 family.</text>
</comment>
<protein>
    <recommendedName>
        <fullName>Probable cytochrome P450 6a21</fullName>
        <ecNumber>1.14.-.-</ecNumber>
    </recommendedName>
    <alternativeName>
        <fullName>CYPVIA21</fullName>
    </alternativeName>
</protein>
<gene>
    <name type="primary">Cyp6a21</name>
    <name type="ORF">CG10247</name>
</gene>
<evidence type="ECO:0000250" key="1"/>
<evidence type="ECO:0000305" key="2"/>
<proteinExistence type="evidence at transcript level"/>
<keyword id="KW-0256">Endoplasmic reticulum</keyword>
<keyword id="KW-0349">Heme</keyword>
<keyword id="KW-0408">Iron</keyword>
<keyword id="KW-0472">Membrane</keyword>
<keyword id="KW-0479">Metal-binding</keyword>
<keyword id="KW-0492">Microsome</keyword>
<keyword id="KW-0503">Monooxygenase</keyword>
<keyword id="KW-0560">Oxidoreductase</keyword>
<keyword id="KW-1185">Reference proteome</keyword>
<accession>Q9V774</accession>
<accession>A8E6J3</accession>
<accession>Q8SZL2</accession>
<reference key="1">
    <citation type="journal article" date="2000" name="Science">
        <title>The genome sequence of Drosophila melanogaster.</title>
        <authorList>
            <person name="Adams M.D."/>
            <person name="Celniker S.E."/>
            <person name="Holt R.A."/>
            <person name="Evans C.A."/>
            <person name="Gocayne J.D."/>
            <person name="Amanatides P.G."/>
            <person name="Scherer S.E."/>
            <person name="Li P.W."/>
            <person name="Hoskins R.A."/>
            <person name="Galle R.F."/>
            <person name="George R.A."/>
            <person name="Lewis S.E."/>
            <person name="Richards S."/>
            <person name="Ashburner M."/>
            <person name="Henderson S.N."/>
            <person name="Sutton G.G."/>
            <person name="Wortman J.R."/>
            <person name="Yandell M.D."/>
            <person name="Zhang Q."/>
            <person name="Chen L.X."/>
            <person name="Brandon R.C."/>
            <person name="Rogers Y.-H.C."/>
            <person name="Blazej R.G."/>
            <person name="Champe M."/>
            <person name="Pfeiffer B.D."/>
            <person name="Wan K.H."/>
            <person name="Doyle C."/>
            <person name="Baxter E.G."/>
            <person name="Helt G."/>
            <person name="Nelson C.R."/>
            <person name="Miklos G.L.G."/>
            <person name="Abril J.F."/>
            <person name="Agbayani A."/>
            <person name="An H.-J."/>
            <person name="Andrews-Pfannkoch C."/>
            <person name="Baldwin D."/>
            <person name="Ballew R.M."/>
            <person name="Basu A."/>
            <person name="Baxendale J."/>
            <person name="Bayraktaroglu L."/>
            <person name="Beasley E.M."/>
            <person name="Beeson K.Y."/>
            <person name="Benos P.V."/>
            <person name="Berman B.P."/>
            <person name="Bhandari D."/>
            <person name="Bolshakov S."/>
            <person name="Borkova D."/>
            <person name="Botchan M.R."/>
            <person name="Bouck J."/>
            <person name="Brokstein P."/>
            <person name="Brottier P."/>
            <person name="Burtis K.C."/>
            <person name="Busam D.A."/>
            <person name="Butler H."/>
            <person name="Cadieu E."/>
            <person name="Center A."/>
            <person name="Chandra I."/>
            <person name="Cherry J.M."/>
            <person name="Cawley S."/>
            <person name="Dahlke C."/>
            <person name="Davenport L.B."/>
            <person name="Davies P."/>
            <person name="de Pablos B."/>
            <person name="Delcher A."/>
            <person name="Deng Z."/>
            <person name="Mays A.D."/>
            <person name="Dew I."/>
            <person name="Dietz S.M."/>
            <person name="Dodson K."/>
            <person name="Doup L.E."/>
            <person name="Downes M."/>
            <person name="Dugan-Rocha S."/>
            <person name="Dunkov B.C."/>
            <person name="Dunn P."/>
            <person name="Durbin K.J."/>
            <person name="Evangelista C.C."/>
            <person name="Ferraz C."/>
            <person name="Ferriera S."/>
            <person name="Fleischmann W."/>
            <person name="Fosler C."/>
            <person name="Gabrielian A.E."/>
            <person name="Garg N.S."/>
            <person name="Gelbart W.M."/>
            <person name="Glasser K."/>
            <person name="Glodek A."/>
            <person name="Gong F."/>
            <person name="Gorrell J.H."/>
            <person name="Gu Z."/>
            <person name="Guan P."/>
            <person name="Harris M."/>
            <person name="Harris N.L."/>
            <person name="Harvey D.A."/>
            <person name="Heiman T.J."/>
            <person name="Hernandez J.R."/>
            <person name="Houck J."/>
            <person name="Hostin D."/>
            <person name="Houston K.A."/>
            <person name="Howland T.J."/>
            <person name="Wei M.-H."/>
            <person name="Ibegwam C."/>
            <person name="Jalali M."/>
            <person name="Kalush F."/>
            <person name="Karpen G.H."/>
            <person name="Ke Z."/>
            <person name="Kennison J.A."/>
            <person name="Ketchum K.A."/>
            <person name="Kimmel B.E."/>
            <person name="Kodira C.D."/>
            <person name="Kraft C.L."/>
            <person name="Kravitz S."/>
            <person name="Kulp D."/>
            <person name="Lai Z."/>
            <person name="Lasko P."/>
            <person name="Lei Y."/>
            <person name="Levitsky A.A."/>
            <person name="Li J.H."/>
            <person name="Li Z."/>
            <person name="Liang Y."/>
            <person name="Lin X."/>
            <person name="Liu X."/>
            <person name="Mattei B."/>
            <person name="McIntosh T.C."/>
            <person name="McLeod M.P."/>
            <person name="McPherson D."/>
            <person name="Merkulov G."/>
            <person name="Milshina N.V."/>
            <person name="Mobarry C."/>
            <person name="Morris J."/>
            <person name="Moshrefi A."/>
            <person name="Mount S.M."/>
            <person name="Moy M."/>
            <person name="Murphy B."/>
            <person name="Murphy L."/>
            <person name="Muzny D.M."/>
            <person name="Nelson D.L."/>
            <person name="Nelson D.R."/>
            <person name="Nelson K.A."/>
            <person name="Nixon K."/>
            <person name="Nusskern D.R."/>
            <person name="Pacleb J.M."/>
            <person name="Palazzolo M."/>
            <person name="Pittman G.S."/>
            <person name="Pan S."/>
            <person name="Pollard J."/>
            <person name="Puri V."/>
            <person name="Reese M.G."/>
            <person name="Reinert K."/>
            <person name="Remington K."/>
            <person name="Saunders R.D.C."/>
            <person name="Scheeler F."/>
            <person name="Shen H."/>
            <person name="Shue B.C."/>
            <person name="Siden-Kiamos I."/>
            <person name="Simpson M."/>
            <person name="Skupski M.P."/>
            <person name="Smith T.J."/>
            <person name="Spier E."/>
            <person name="Spradling A.C."/>
            <person name="Stapleton M."/>
            <person name="Strong R."/>
            <person name="Sun E."/>
            <person name="Svirskas R."/>
            <person name="Tector C."/>
            <person name="Turner R."/>
            <person name="Venter E."/>
            <person name="Wang A.H."/>
            <person name="Wang X."/>
            <person name="Wang Z.-Y."/>
            <person name="Wassarman D.A."/>
            <person name="Weinstock G.M."/>
            <person name="Weissenbach J."/>
            <person name="Williams S.M."/>
            <person name="Woodage T."/>
            <person name="Worley K.C."/>
            <person name="Wu D."/>
            <person name="Yang S."/>
            <person name="Yao Q.A."/>
            <person name="Ye J."/>
            <person name="Yeh R.-F."/>
            <person name="Zaveri J.S."/>
            <person name="Zhan M."/>
            <person name="Zhang G."/>
            <person name="Zhao Q."/>
            <person name="Zheng L."/>
            <person name="Zheng X.H."/>
            <person name="Zhong F.N."/>
            <person name="Zhong W."/>
            <person name="Zhou X."/>
            <person name="Zhu S.C."/>
            <person name="Zhu X."/>
            <person name="Smith H.O."/>
            <person name="Gibbs R.A."/>
            <person name="Myers E.W."/>
            <person name="Rubin G.M."/>
            <person name="Venter J.C."/>
        </authorList>
    </citation>
    <scope>NUCLEOTIDE SEQUENCE [LARGE SCALE GENOMIC DNA]</scope>
    <source>
        <strain>Berkeley</strain>
    </source>
</reference>
<reference key="2">
    <citation type="journal article" date="2002" name="Genome Biol.">
        <title>Annotation of the Drosophila melanogaster euchromatic genome: a systematic review.</title>
        <authorList>
            <person name="Misra S."/>
            <person name="Crosby M.A."/>
            <person name="Mungall C.J."/>
            <person name="Matthews B.B."/>
            <person name="Campbell K.S."/>
            <person name="Hradecky P."/>
            <person name="Huang Y."/>
            <person name="Kaminker J.S."/>
            <person name="Millburn G.H."/>
            <person name="Prochnik S.E."/>
            <person name="Smith C.D."/>
            <person name="Tupy J.L."/>
            <person name="Whitfield E.J."/>
            <person name="Bayraktaroglu L."/>
            <person name="Berman B.P."/>
            <person name="Bettencourt B.R."/>
            <person name="Celniker S.E."/>
            <person name="de Grey A.D.N.J."/>
            <person name="Drysdale R.A."/>
            <person name="Harris N.L."/>
            <person name="Richter J."/>
            <person name="Russo S."/>
            <person name="Schroeder A.J."/>
            <person name="Shu S.Q."/>
            <person name="Stapleton M."/>
            <person name="Yamada C."/>
            <person name="Ashburner M."/>
            <person name="Gelbart W.M."/>
            <person name="Rubin G.M."/>
            <person name="Lewis S.E."/>
        </authorList>
    </citation>
    <scope>GENOME REANNOTATION</scope>
    <source>
        <strain>Berkeley</strain>
    </source>
</reference>
<reference key="3">
    <citation type="journal article" date="2002" name="Genome Biol.">
        <title>A Drosophila full-length cDNA resource.</title>
        <authorList>
            <person name="Stapleton M."/>
            <person name="Carlson J.W."/>
            <person name="Brokstein P."/>
            <person name="Yu C."/>
            <person name="Champe M."/>
            <person name="George R.A."/>
            <person name="Guarin H."/>
            <person name="Kronmiller B."/>
            <person name="Pacleb J.M."/>
            <person name="Park S."/>
            <person name="Wan K.H."/>
            <person name="Rubin G.M."/>
            <person name="Celniker S.E."/>
        </authorList>
    </citation>
    <scope>NUCLEOTIDE SEQUENCE [LARGE SCALE MRNA]</scope>
    <source>
        <strain>Berkeley</strain>
        <tissue>Head</tissue>
    </source>
</reference>
<reference key="4">
    <citation type="submission" date="2007-10" db="EMBL/GenBank/DDBJ databases">
        <authorList>
            <person name="Stapleton M."/>
            <person name="Carlson J.W."/>
            <person name="Frise E."/>
            <person name="Kapadia B."/>
            <person name="Park S."/>
            <person name="Wan K.H."/>
            <person name="Yu C."/>
            <person name="Celniker S.E."/>
        </authorList>
    </citation>
    <scope>NUCLEOTIDE SEQUENCE [LARGE SCALE MRNA]</scope>
    <source>
        <strain>Berkeley</strain>
    </source>
</reference>
<organism>
    <name type="scientific">Drosophila melanogaster</name>
    <name type="common">Fruit fly</name>
    <dbReference type="NCBI Taxonomy" id="7227"/>
    <lineage>
        <taxon>Eukaryota</taxon>
        <taxon>Metazoa</taxon>
        <taxon>Ecdysozoa</taxon>
        <taxon>Arthropoda</taxon>
        <taxon>Hexapoda</taxon>
        <taxon>Insecta</taxon>
        <taxon>Pterygota</taxon>
        <taxon>Neoptera</taxon>
        <taxon>Endopterygota</taxon>
        <taxon>Diptera</taxon>
        <taxon>Brachycera</taxon>
        <taxon>Muscomorpha</taxon>
        <taxon>Ephydroidea</taxon>
        <taxon>Drosophilidae</taxon>
        <taxon>Drosophila</taxon>
        <taxon>Sophophora</taxon>
    </lineage>
</organism>
<dbReference type="EC" id="1.14.-.-"/>
<dbReference type="EMBL" id="AE013599">
    <property type="protein sequence ID" value="AAF58186.1"/>
    <property type="molecule type" value="Genomic_DNA"/>
</dbReference>
<dbReference type="EMBL" id="AY070678">
    <property type="protein sequence ID" value="AAL48149.1"/>
    <property type="molecule type" value="mRNA"/>
</dbReference>
<dbReference type="EMBL" id="BT030785">
    <property type="protein sequence ID" value="ABV82167.1"/>
    <property type="molecule type" value="mRNA"/>
</dbReference>
<dbReference type="RefSeq" id="NP_611003.2">
    <property type="nucleotide sequence ID" value="NM_137159.4"/>
</dbReference>
<dbReference type="SMR" id="Q9V774"/>
<dbReference type="BioGRID" id="62407">
    <property type="interactions" value="1"/>
</dbReference>
<dbReference type="FunCoup" id="Q9V774">
    <property type="interactions" value="5"/>
</dbReference>
<dbReference type="STRING" id="7227.FBpp0086586"/>
<dbReference type="PaxDb" id="7227-FBpp0086586"/>
<dbReference type="DNASU" id="36665"/>
<dbReference type="EnsemblMetazoa" id="FBtr0087456">
    <property type="protein sequence ID" value="FBpp0086586"/>
    <property type="gene ID" value="FBgn0288232"/>
</dbReference>
<dbReference type="GeneID" id="36665"/>
<dbReference type="KEGG" id="dme:Dmel_CG10247"/>
<dbReference type="UCSC" id="CG10247-RA">
    <property type="organism name" value="d. melanogaster"/>
</dbReference>
<dbReference type="AGR" id="FB:FBgn0288232"/>
<dbReference type="CTD" id="36665"/>
<dbReference type="FlyBase" id="FBgn0288232">
    <property type="gene designation" value="Cyp6a21"/>
</dbReference>
<dbReference type="VEuPathDB" id="VectorBase:FBgn0288232"/>
<dbReference type="eggNOG" id="KOG0158">
    <property type="taxonomic scope" value="Eukaryota"/>
</dbReference>
<dbReference type="GeneTree" id="ENSGT00940000165972"/>
<dbReference type="HOGENOM" id="CLU_001570_5_2_1"/>
<dbReference type="InParanoid" id="Q9V774"/>
<dbReference type="OMA" id="CEEPHWL"/>
<dbReference type="OrthoDB" id="2789670at2759"/>
<dbReference type="PhylomeDB" id="Q9V774"/>
<dbReference type="BioGRID-ORCS" id="36665">
    <property type="hits" value="0 hits in 3 CRISPR screens"/>
</dbReference>
<dbReference type="GenomeRNAi" id="36665"/>
<dbReference type="PRO" id="PR:Q9V774"/>
<dbReference type="Proteomes" id="UP000000803">
    <property type="component" value="Chromosome 2R"/>
</dbReference>
<dbReference type="Bgee" id="FBgn0033981">
    <property type="expression patterns" value="Expressed in epithelial cell in haltere and 46 other cell types or tissues"/>
</dbReference>
<dbReference type="GO" id="GO:0005789">
    <property type="term" value="C:endoplasmic reticulum membrane"/>
    <property type="evidence" value="ECO:0007669"/>
    <property type="project" value="UniProtKB-SubCell"/>
</dbReference>
<dbReference type="GO" id="GO:0020037">
    <property type="term" value="F:heme binding"/>
    <property type="evidence" value="ECO:0007669"/>
    <property type="project" value="InterPro"/>
</dbReference>
<dbReference type="GO" id="GO:0005506">
    <property type="term" value="F:iron ion binding"/>
    <property type="evidence" value="ECO:0007669"/>
    <property type="project" value="InterPro"/>
</dbReference>
<dbReference type="GO" id="GO:0004497">
    <property type="term" value="F:monooxygenase activity"/>
    <property type="evidence" value="ECO:0007669"/>
    <property type="project" value="UniProtKB-KW"/>
</dbReference>
<dbReference type="GO" id="GO:0016705">
    <property type="term" value="F:oxidoreductase activity, acting on paired donors, with incorporation or reduction of molecular oxygen"/>
    <property type="evidence" value="ECO:0007669"/>
    <property type="project" value="InterPro"/>
</dbReference>
<dbReference type="CDD" id="cd11056">
    <property type="entry name" value="CYP6-like"/>
    <property type="match status" value="1"/>
</dbReference>
<dbReference type="FunFam" id="1.10.630.10:FF:000042">
    <property type="entry name" value="Cytochrome P450"/>
    <property type="match status" value="1"/>
</dbReference>
<dbReference type="Gene3D" id="1.10.630.10">
    <property type="entry name" value="Cytochrome P450"/>
    <property type="match status" value="1"/>
</dbReference>
<dbReference type="InterPro" id="IPR001128">
    <property type="entry name" value="Cyt_P450"/>
</dbReference>
<dbReference type="InterPro" id="IPR017972">
    <property type="entry name" value="Cyt_P450_CS"/>
</dbReference>
<dbReference type="InterPro" id="IPR002401">
    <property type="entry name" value="Cyt_P450_E_grp-I"/>
</dbReference>
<dbReference type="InterPro" id="IPR036396">
    <property type="entry name" value="Cyt_P450_sf"/>
</dbReference>
<dbReference type="InterPro" id="IPR050476">
    <property type="entry name" value="Insect_CytP450_Detox"/>
</dbReference>
<dbReference type="PANTHER" id="PTHR24292">
    <property type="entry name" value="CYTOCHROME P450"/>
    <property type="match status" value="1"/>
</dbReference>
<dbReference type="PANTHER" id="PTHR24292:SF100">
    <property type="entry name" value="CYTOCHROME P450 6A16, ISOFORM B-RELATED"/>
    <property type="match status" value="1"/>
</dbReference>
<dbReference type="Pfam" id="PF00067">
    <property type="entry name" value="p450"/>
    <property type="match status" value="1"/>
</dbReference>
<dbReference type="PRINTS" id="PR00463">
    <property type="entry name" value="EP450I"/>
</dbReference>
<dbReference type="PRINTS" id="PR00385">
    <property type="entry name" value="P450"/>
</dbReference>
<dbReference type="SUPFAM" id="SSF48264">
    <property type="entry name" value="Cytochrome P450"/>
    <property type="match status" value="1"/>
</dbReference>
<dbReference type="PROSITE" id="PS00086">
    <property type="entry name" value="CYTOCHROME_P450"/>
    <property type="match status" value="1"/>
</dbReference>
<feature type="chain" id="PRO_0000051875" description="Probable cytochrome P450 6a21">
    <location>
        <begin position="1"/>
        <end position="504"/>
    </location>
</feature>
<feature type="binding site" description="axial binding residue" evidence="1">
    <location>
        <position position="449"/>
    </location>
    <ligand>
        <name>heme</name>
        <dbReference type="ChEBI" id="CHEBI:30413"/>
    </ligand>
    <ligandPart>
        <name>Fe</name>
        <dbReference type="ChEBI" id="CHEBI:18248"/>
    </ligandPart>
</feature>
<feature type="sequence conflict" description="In Ref. 3; AAL48149." evidence="2" ref="3">
    <original>K</original>
    <variation>E</variation>
    <location>
        <position position="47"/>
    </location>
</feature>
<sequence>MSVGTVLLTALLALVGYLLMKWRSTMRHWQDLGIPCEEPHILMGSMKGVRTARSFNEIWTSYYNKFRGSGPFAGFYWFRRPAVFVLETSLAKQILIKEFNKFTDRGFFHNPEDDPLSGQLFLLDGQKWRTMRNKLSSTFTSGKMKYMFPTVVKVANEFTDVFGQNVAKSPVVEVRELLARFTTDVIGTCAFGIECSSLKDPDAEFREMGRRSLTEQRLGPVGIGFVNSFPNLARRLHMKMTAEPIERFFMRIVRETVAFREQNNIRRNDFMDQLIDLKNKPLMVSQSGESVNLTIEEIAAQAFVFFAAGFETSSTTMGFALYELAQNQDIQNRVRKECQEVIEKCNGELNYESMKDLVYLDQVVSETLRLYTVLPVLNRECLEDYEVPGHPKYVIKKGMPVLIPCGAMHRDEKLYANPNTFNPDNFSPERVKERDSVEWLPFGDGPRNCIGMRFGQMQARIGLALLIKDFKFSVCEKTTIPMTYNKEMFLIASNSGIYLKAERV</sequence>
<name>C6A21_DROME</name>